<feature type="chain" id="PRO_0000345119" description="Sugar transporter SWEET1">
    <location>
        <begin position="1"/>
        <end position="219"/>
    </location>
</feature>
<feature type="transmembrane region" description="Helical; Name=1" evidence="2">
    <location>
        <begin position="3"/>
        <end position="23"/>
    </location>
</feature>
<feature type="transmembrane region" description="Helical; Name=2" evidence="2">
    <location>
        <begin position="38"/>
        <end position="58"/>
    </location>
</feature>
<feature type="transmembrane region" description="Helical; Name=3" evidence="2">
    <location>
        <begin position="63"/>
        <end position="83"/>
    </location>
</feature>
<feature type="transmembrane region" description="Helical; Name=4" evidence="2">
    <location>
        <begin position="98"/>
        <end position="118"/>
    </location>
</feature>
<feature type="transmembrane region" description="Helical; Name=5" evidence="2">
    <location>
        <begin position="125"/>
        <end position="145"/>
    </location>
</feature>
<feature type="transmembrane region" description="Helical; Name=6" evidence="2">
    <location>
        <begin position="156"/>
        <end position="176"/>
    </location>
</feature>
<feature type="transmembrane region" description="Helical; Name=7" evidence="2">
    <location>
        <begin position="189"/>
        <end position="209"/>
    </location>
</feature>
<feature type="domain" description="MtN3/slv 1">
    <location>
        <begin position="5"/>
        <end position="90"/>
    </location>
</feature>
<feature type="domain" description="MtN3/slv 2">
    <location>
        <begin position="124"/>
        <end position="204"/>
    </location>
</feature>
<organism>
    <name type="scientific">Danio rerio</name>
    <name type="common">Zebrafish</name>
    <name type="synonym">Brachydanio rerio</name>
    <dbReference type="NCBI Taxonomy" id="7955"/>
    <lineage>
        <taxon>Eukaryota</taxon>
        <taxon>Metazoa</taxon>
        <taxon>Chordata</taxon>
        <taxon>Craniata</taxon>
        <taxon>Vertebrata</taxon>
        <taxon>Euteleostomi</taxon>
        <taxon>Actinopterygii</taxon>
        <taxon>Neopterygii</taxon>
        <taxon>Teleostei</taxon>
        <taxon>Ostariophysi</taxon>
        <taxon>Cypriniformes</taxon>
        <taxon>Danionidae</taxon>
        <taxon>Danioninae</taxon>
        <taxon>Danio</taxon>
    </lineage>
</organism>
<gene>
    <name type="primary">slc50a1</name>
    <name type="synonym">rag1ap1</name>
    <name type="ORF">zgc:113092</name>
</gene>
<name>SWET1_DANRE</name>
<accession>Q5EB14</accession>
<reference key="1">
    <citation type="submission" date="2005-02" db="EMBL/GenBank/DDBJ databases">
        <authorList>
            <consortium name="NIH - Zebrafish Gene Collection (ZGC) project"/>
        </authorList>
    </citation>
    <scope>NUCLEOTIDE SEQUENCE [LARGE SCALE MRNA]</scope>
    <source>
        <tissue>Embryo</tissue>
    </source>
</reference>
<evidence type="ECO:0000250" key="1"/>
<evidence type="ECO:0000255" key="2"/>
<evidence type="ECO:0000305" key="3"/>
<proteinExistence type="evidence at transcript level"/>
<sequence length="219" mass="24803">MDFLQLLSCACIIFTVGMFTTGLTDLKKMKATQSADNVQFLPFLTTCLNNLGWLYYGLLKGDGTVIFVNIIGAFLQTVYIATYCHYTKEKRRVYTQTLLMVSVLCVAWVYFSLVISPGEAQLSQLGLTCSVFTISMYLSPLADLLDIMRTKSVERLSFSLTVATFFTSTSWTLYGLQLGDYYIMVPNTPGIFTSLIRFFLFWWFGAVIPQIPSYKLIQI</sequence>
<dbReference type="EMBL" id="BC090168">
    <property type="protein sequence ID" value="AAH90168.1"/>
    <property type="status" value="ALT_INIT"/>
    <property type="molecule type" value="mRNA"/>
</dbReference>
<dbReference type="RefSeq" id="NP_001012515.2">
    <property type="nucleotide sequence ID" value="NM_001012497.2"/>
</dbReference>
<dbReference type="SMR" id="Q5EB14"/>
<dbReference type="FunCoup" id="Q5EB14">
    <property type="interactions" value="506"/>
</dbReference>
<dbReference type="STRING" id="7955.ENSDARP00000025588"/>
<dbReference type="PaxDb" id="7955-ENSDARP00000025588"/>
<dbReference type="Ensembl" id="ENSDART00000006093">
    <property type="protein sequence ID" value="ENSDARP00000025588"/>
    <property type="gene ID" value="ENSDARG00000015158"/>
</dbReference>
<dbReference type="GeneID" id="503533"/>
<dbReference type="KEGG" id="dre:503533"/>
<dbReference type="AGR" id="ZFIN:ZDB-GENE-050220-11"/>
<dbReference type="CTD" id="55974"/>
<dbReference type="ZFIN" id="ZDB-GENE-050220-11">
    <property type="gene designation" value="slc50a1"/>
</dbReference>
<dbReference type="eggNOG" id="KOG1623">
    <property type="taxonomic scope" value="Eukaryota"/>
</dbReference>
<dbReference type="HOGENOM" id="CLU_048643_3_0_1"/>
<dbReference type="InParanoid" id="Q5EB14"/>
<dbReference type="OMA" id="QLNDYYI"/>
<dbReference type="OrthoDB" id="409725at2759"/>
<dbReference type="PhylomeDB" id="Q5EB14"/>
<dbReference type="TreeFam" id="TF313635"/>
<dbReference type="Reactome" id="R-DRE-189200">
    <property type="pathway name" value="Cellular hexose transport"/>
</dbReference>
<dbReference type="PRO" id="PR:Q5EB14"/>
<dbReference type="Proteomes" id="UP000000437">
    <property type="component" value="Chromosome 16"/>
</dbReference>
<dbReference type="Bgee" id="ENSDARG00000015158">
    <property type="expression patterns" value="Expressed in mature ovarian follicle and 19 other cell types or tissues"/>
</dbReference>
<dbReference type="GO" id="GO:0000139">
    <property type="term" value="C:Golgi membrane"/>
    <property type="evidence" value="ECO:0007669"/>
    <property type="project" value="UniProtKB-SubCell"/>
</dbReference>
<dbReference type="GO" id="GO:0016020">
    <property type="term" value="C:membrane"/>
    <property type="evidence" value="ECO:0000318"/>
    <property type="project" value="GO_Central"/>
</dbReference>
<dbReference type="GO" id="GO:0005886">
    <property type="term" value="C:plasma membrane"/>
    <property type="evidence" value="ECO:0007669"/>
    <property type="project" value="UniProtKB-SubCell"/>
</dbReference>
<dbReference type="GO" id="GO:0051119">
    <property type="term" value="F:sugar transmembrane transporter activity"/>
    <property type="evidence" value="ECO:0000250"/>
    <property type="project" value="UniProtKB"/>
</dbReference>
<dbReference type="GO" id="GO:0008643">
    <property type="term" value="P:carbohydrate transport"/>
    <property type="evidence" value="ECO:0000318"/>
    <property type="project" value="GO_Central"/>
</dbReference>
<dbReference type="FunFam" id="1.20.1280.290:FF:000004">
    <property type="entry name" value="Sugar transporter SWEET"/>
    <property type="match status" value="1"/>
</dbReference>
<dbReference type="FunFam" id="1.20.1280.290:FF:000010">
    <property type="entry name" value="Sugar transporter SWEET"/>
    <property type="match status" value="1"/>
</dbReference>
<dbReference type="Gene3D" id="1.20.1280.290">
    <property type="match status" value="2"/>
</dbReference>
<dbReference type="InterPro" id="IPR047664">
    <property type="entry name" value="SWEET"/>
</dbReference>
<dbReference type="InterPro" id="IPR004316">
    <property type="entry name" value="SWEET_rpt"/>
</dbReference>
<dbReference type="PANTHER" id="PTHR10791">
    <property type="entry name" value="RAG1-ACTIVATING PROTEIN 1"/>
    <property type="match status" value="1"/>
</dbReference>
<dbReference type="PANTHER" id="PTHR10791:SF30">
    <property type="entry name" value="SUGAR TRANSPORTER SWEET1"/>
    <property type="match status" value="1"/>
</dbReference>
<dbReference type="Pfam" id="PF03083">
    <property type="entry name" value="MtN3_slv"/>
    <property type="match status" value="2"/>
</dbReference>
<comment type="function">
    <text evidence="1">Mediates sugar transport across membranes.</text>
</comment>
<comment type="subcellular location">
    <subcellularLocation>
        <location evidence="1">Golgi apparatus membrane</location>
        <topology evidence="1">Multi-pass membrane protein</topology>
    </subcellularLocation>
    <subcellularLocation>
        <location evidence="1">Cell membrane</location>
        <topology evidence="1">Multi-pass membrane protein</topology>
    </subcellularLocation>
</comment>
<comment type="similarity">
    <text evidence="3">Belongs to the SWEET sugar transporter family.</text>
</comment>
<comment type="sequence caution" evidence="3">
    <conflict type="erroneous initiation">
        <sequence resource="EMBL-CDS" id="AAH90168"/>
    </conflict>
    <text>Extended N-terminus.</text>
</comment>
<protein>
    <recommendedName>
        <fullName>Sugar transporter SWEET1</fullName>
    </recommendedName>
    <alternativeName>
        <fullName>RAG1-activating protein 1</fullName>
    </alternativeName>
    <alternativeName>
        <fullName>Solute carrier family 50 member 1</fullName>
    </alternativeName>
</protein>
<keyword id="KW-1003">Cell membrane</keyword>
<keyword id="KW-0333">Golgi apparatus</keyword>
<keyword id="KW-0472">Membrane</keyword>
<keyword id="KW-1185">Reference proteome</keyword>
<keyword id="KW-0677">Repeat</keyword>
<keyword id="KW-0762">Sugar transport</keyword>
<keyword id="KW-0812">Transmembrane</keyword>
<keyword id="KW-1133">Transmembrane helix</keyword>
<keyword id="KW-0813">Transport</keyword>